<gene>
    <name evidence="1" type="primary">rplE</name>
    <name type="ordered locus">plu4714</name>
</gene>
<accession>Q7MYG3</accession>
<proteinExistence type="inferred from homology"/>
<sequence>MAKLHDYYKDEVVQKLMTQFGYNSVMQVPRVEKITLNMGVGEAIADKKLLDNAAADLAAISGQKPLITKARKSVAGFKIRQGYPIGCKVTLRGERMWEFLERLISIAVPRIRDFRGLSAKSFDGRGNYSMGVREQIIFPEIDYDKVDRVRGLDITITTTAKSDDEGRALLAAFNFPFRK</sequence>
<feature type="chain" id="PRO_0000124963" description="Large ribosomal subunit protein uL5">
    <location>
        <begin position="1"/>
        <end position="179"/>
    </location>
</feature>
<keyword id="KW-1185">Reference proteome</keyword>
<keyword id="KW-0687">Ribonucleoprotein</keyword>
<keyword id="KW-0689">Ribosomal protein</keyword>
<keyword id="KW-0694">RNA-binding</keyword>
<keyword id="KW-0699">rRNA-binding</keyword>
<keyword id="KW-0820">tRNA-binding</keyword>
<comment type="function">
    <text evidence="1">This is one of the proteins that bind and probably mediate the attachment of the 5S RNA into the large ribosomal subunit, where it forms part of the central protuberance. In the 70S ribosome it contacts protein S13 of the 30S subunit (bridge B1b), connecting the 2 subunits; this bridge is implicated in subunit movement. Contacts the P site tRNA; the 5S rRNA and some of its associated proteins might help stabilize positioning of ribosome-bound tRNAs.</text>
</comment>
<comment type="subunit">
    <text evidence="1">Part of the 50S ribosomal subunit; part of the 5S rRNA/L5/L18/L25 subcomplex. Contacts the 5S rRNA and the P site tRNA. Forms a bridge to the 30S subunit in the 70S ribosome.</text>
</comment>
<comment type="similarity">
    <text evidence="1">Belongs to the universal ribosomal protein uL5 family.</text>
</comment>
<organism>
    <name type="scientific">Photorhabdus laumondii subsp. laumondii (strain DSM 15139 / CIP 105565 / TT01)</name>
    <name type="common">Photorhabdus luminescens subsp. laumondii</name>
    <dbReference type="NCBI Taxonomy" id="243265"/>
    <lineage>
        <taxon>Bacteria</taxon>
        <taxon>Pseudomonadati</taxon>
        <taxon>Pseudomonadota</taxon>
        <taxon>Gammaproteobacteria</taxon>
        <taxon>Enterobacterales</taxon>
        <taxon>Morganellaceae</taxon>
        <taxon>Photorhabdus</taxon>
    </lineage>
</organism>
<reference key="1">
    <citation type="journal article" date="2003" name="Nat. Biotechnol.">
        <title>The genome sequence of the entomopathogenic bacterium Photorhabdus luminescens.</title>
        <authorList>
            <person name="Duchaud E."/>
            <person name="Rusniok C."/>
            <person name="Frangeul L."/>
            <person name="Buchrieser C."/>
            <person name="Givaudan A."/>
            <person name="Taourit S."/>
            <person name="Bocs S."/>
            <person name="Boursaux-Eude C."/>
            <person name="Chandler M."/>
            <person name="Charles J.-F."/>
            <person name="Dassa E."/>
            <person name="Derose R."/>
            <person name="Derzelle S."/>
            <person name="Freyssinet G."/>
            <person name="Gaudriault S."/>
            <person name="Medigue C."/>
            <person name="Lanois A."/>
            <person name="Powell K."/>
            <person name="Siguier P."/>
            <person name="Vincent R."/>
            <person name="Wingate V."/>
            <person name="Zouine M."/>
            <person name="Glaser P."/>
            <person name="Boemare N."/>
            <person name="Danchin A."/>
            <person name="Kunst F."/>
        </authorList>
    </citation>
    <scope>NUCLEOTIDE SEQUENCE [LARGE SCALE GENOMIC DNA]</scope>
    <source>
        <strain>DSM 15139 / CIP 105565 / TT01</strain>
    </source>
</reference>
<dbReference type="EMBL" id="BX571874">
    <property type="protein sequence ID" value="CAE17086.1"/>
    <property type="molecule type" value="Genomic_DNA"/>
</dbReference>
<dbReference type="RefSeq" id="WP_011148783.1">
    <property type="nucleotide sequence ID" value="NC_005126.1"/>
</dbReference>
<dbReference type="SMR" id="Q7MYG3"/>
<dbReference type="STRING" id="243265.plu4714"/>
<dbReference type="GeneID" id="88808146"/>
<dbReference type="KEGG" id="plu:plu4714"/>
<dbReference type="eggNOG" id="COG0094">
    <property type="taxonomic scope" value="Bacteria"/>
</dbReference>
<dbReference type="HOGENOM" id="CLU_061015_2_1_6"/>
<dbReference type="OrthoDB" id="9806626at2"/>
<dbReference type="Proteomes" id="UP000002514">
    <property type="component" value="Chromosome"/>
</dbReference>
<dbReference type="GO" id="GO:1990904">
    <property type="term" value="C:ribonucleoprotein complex"/>
    <property type="evidence" value="ECO:0007669"/>
    <property type="project" value="UniProtKB-KW"/>
</dbReference>
<dbReference type="GO" id="GO:0005840">
    <property type="term" value="C:ribosome"/>
    <property type="evidence" value="ECO:0007669"/>
    <property type="project" value="UniProtKB-KW"/>
</dbReference>
<dbReference type="GO" id="GO:0019843">
    <property type="term" value="F:rRNA binding"/>
    <property type="evidence" value="ECO:0007669"/>
    <property type="project" value="UniProtKB-UniRule"/>
</dbReference>
<dbReference type="GO" id="GO:0003735">
    <property type="term" value="F:structural constituent of ribosome"/>
    <property type="evidence" value="ECO:0007669"/>
    <property type="project" value="InterPro"/>
</dbReference>
<dbReference type="GO" id="GO:0000049">
    <property type="term" value="F:tRNA binding"/>
    <property type="evidence" value="ECO:0007669"/>
    <property type="project" value="UniProtKB-UniRule"/>
</dbReference>
<dbReference type="GO" id="GO:0006412">
    <property type="term" value="P:translation"/>
    <property type="evidence" value="ECO:0007669"/>
    <property type="project" value="UniProtKB-UniRule"/>
</dbReference>
<dbReference type="FunFam" id="3.30.1440.10:FF:000001">
    <property type="entry name" value="50S ribosomal protein L5"/>
    <property type="match status" value="1"/>
</dbReference>
<dbReference type="Gene3D" id="3.30.1440.10">
    <property type="match status" value="1"/>
</dbReference>
<dbReference type="HAMAP" id="MF_01333_B">
    <property type="entry name" value="Ribosomal_uL5_B"/>
    <property type="match status" value="1"/>
</dbReference>
<dbReference type="InterPro" id="IPR002132">
    <property type="entry name" value="Ribosomal_uL5"/>
</dbReference>
<dbReference type="InterPro" id="IPR020930">
    <property type="entry name" value="Ribosomal_uL5_bac-type"/>
</dbReference>
<dbReference type="InterPro" id="IPR031309">
    <property type="entry name" value="Ribosomal_uL5_C"/>
</dbReference>
<dbReference type="InterPro" id="IPR020929">
    <property type="entry name" value="Ribosomal_uL5_CS"/>
</dbReference>
<dbReference type="InterPro" id="IPR022803">
    <property type="entry name" value="Ribosomal_uL5_dom_sf"/>
</dbReference>
<dbReference type="InterPro" id="IPR031310">
    <property type="entry name" value="Ribosomal_uL5_N"/>
</dbReference>
<dbReference type="NCBIfam" id="NF000585">
    <property type="entry name" value="PRK00010.1"/>
    <property type="match status" value="1"/>
</dbReference>
<dbReference type="PANTHER" id="PTHR11994">
    <property type="entry name" value="60S RIBOSOMAL PROTEIN L11-RELATED"/>
    <property type="match status" value="1"/>
</dbReference>
<dbReference type="Pfam" id="PF00281">
    <property type="entry name" value="Ribosomal_L5"/>
    <property type="match status" value="1"/>
</dbReference>
<dbReference type="Pfam" id="PF00673">
    <property type="entry name" value="Ribosomal_L5_C"/>
    <property type="match status" value="1"/>
</dbReference>
<dbReference type="PIRSF" id="PIRSF002161">
    <property type="entry name" value="Ribosomal_L5"/>
    <property type="match status" value="1"/>
</dbReference>
<dbReference type="SUPFAM" id="SSF55282">
    <property type="entry name" value="RL5-like"/>
    <property type="match status" value="1"/>
</dbReference>
<dbReference type="PROSITE" id="PS00358">
    <property type="entry name" value="RIBOSOMAL_L5"/>
    <property type="match status" value="1"/>
</dbReference>
<evidence type="ECO:0000255" key="1">
    <source>
        <dbReference type="HAMAP-Rule" id="MF_01333"/>
    </source>
</evidence>
<evidence type="ECO:0000305" key="2"/>
<name>RL5_PHOLL</name>
<protein>
    <recommendedName>
        <fullName evidence="1">Large ribosomal subunit protein uL5</fullName>
    </recommendedName>
    <alternativeName>
        <fullName evidence="2">50S ribosomal protein L5</fullName>
    </alternativeName>
</protein>